<evidence type="ECO:0000255" key="1">
    <source>
        <dbReference type="HAMAP-Rule" id="MF_00385"/>
    </source>
</evidence>
<evidence type="ECO:0000256" key="2">
    <source>
        <dbReference type="SAM" id="MobiDB-lite"/>
    </source>
</evidence>
<evidence type="ECO:0000305" key="3"/>
<dbReference type="EMBL" id="FM211192">
    <property type="protein sequence ID" value="CAR71713.1"/>
    <property type="molecule type" value="Genomic_DNA"/>
</dbReference>
<dbReference type="SMR" id="B8ZRW9"/>
<dbReference type="KEGG" id="mlb:MLBr01618"/>
<dbReference type="HOGENOM" id="CLU_100590_1_1_11"/>
<dbReference type="Proteomes" id="UP000006900">
    <property type="component" value="Chromosome"/>
</dbReference>
<dbReference type="GO" id="GO:0005737">
    <property type="term" value="C:cytoplasm"/>
    <property type="evidence" value="ECO:0007669"/>
    <property type="project" value="UniProtKB-ARBA"/>
</dbReference>
<dbReference type="GO" id="GO:0015935">
    <property type="term" value="C:small ribosomal subunit"/>
    <property type="evidence" value="ECO:0007669"/>
    <property type="project" value="TreeGrafter"/>
</dbReference>
<dbReference type="GO" id="GO:0003735">
    <property type="term" value="F:structural constituent of ribosome"/>
    <property type="evidence" value="ECO:0007669"/>
    <property type="project" value="InterPro"/>
</dbReference>
<dbReference type="GO" id="GO:0006412">
    <property type="term" value="P:translation"/>
    <property type="evidence" value="ECO:0007669"/>
    <property type="project" value="UniProtKB-UniRule"/>
</dbReference>
<dbReference type="Gene3D" id="3.30.1320.10">
    <property type="match status" value="1"/>
</dbReference>
<dbReference type="HAMAP" id="MF_00385">
    <property type="entry name" value="Ribosomal_bS16"/>
    <property type="match status" value="1"/>
</dbReference>
<dbReference type="InterPro" id="IPR000307">
    <property type="entry name" value="Ribosomal_bS16"/>
</dbReference>
<dbReference type="InterPro" id="IPR020592">
    <property type="entry name" value="Ribosomal_bS16_CS"/>
</dbReference>
<dbReference type="InterPro" id="IPR023803">
    <property type="entry name" value="Ribosomal_bS16_dom_sf"/>
</dbReference>
<dbReference type="NCBIfam" id="NF011093">
    <property type="entry name" value="PRK14520.1"/>
    <property type="match status" value="1"/>
</dbReference>
<dbReference type="NCBIfam" id="TIGR00002">
    <property type="entry name" value="S16"/>
    <property type="match status" value="1"/>
</dbReference>
<dbReference type="PANTHER" id="PTHR12919">
    <property type="entry name" value="30S RIBOSOMAL PROTEIN S16"/>
    <property type="match status" value="1"/>
</dbReference>
<dbReference type="PANTHER" id="PTHR12919:SF20">
    <property type="entry name" value="SMALL RIBOSOMAL SUBUNIT PROTEIN BS16M"/>
    <property type="match status" value="1"/>
</dbReference>
<dbReference type="Pfam" id="PF00886">
    <property type="entry name" value="Ribosomal_S16"/>
    <property type="match status" value="1"/>
</dbReference>
<dbReference type="SUPFAM" id="SSF54565">
    <property type="entry name" value="Ribosomal protein S16"/>
    <property type="match status" value="1"/>
</dbReference>
<dbReference type="PROSITE" id="PS00732">
    <property type="entry name" value="RIBOSOMAL_S16"/>
    <property type="match status" value="1"/>
</dbReference>
<accession>B8ZRW9</accession>
<feature type="chain" id="PRO_1000134316" description="Small ribosomal subunit protein bS16">
    <location>
        <begin position="1"/>
        <end position="160"/>
    </location>
</feature>
<feature type="region of interest" description="Disordered" evidence="2">
    <location>
        <begin position="115"/>
        <end position="139"/>
    </location>
</feature>
<feature type="compositionally biased region" description="Basic residues" evidence="2">
    <location>
        <begin position="124"/>
        <end position="134"/>
    </location>
</feature>
<protein>
    <recommendedName>
        <fullName evidence="1">Small ribosomal subunit protein bS16</fullName>
    </recommendedName>
    <alternativeName>
        <fullName evidence="3">30S ribosomal protein S16</fullName>
    </alternativeName>
</protein>
<keyword id="KW-0687">Ribonucleoprotein</keyword>
<keyword id="KW-0689">Ribosomal protein</keyword>
<reference key="1">
    <citation type="journal article" date="2009" name="Nat. Genet.">
        <title>Comparative genomic and phylogeographic analysis of Mycobacterium leprae.</title>
        <authorList>
            <person name="Monot M."/>
            <person name="Honore N."/>
            <person name="Garnier T."/>
            <person name="Zidane N."/>
            <person name="Sherafi D."/>
            <person name="Paniz-Mondolfi A."/>
            <person name="Matsuoka M."/>
            <person name="Taylor G.M."/>
            <person name="Donoghue H.D."/>
            <person name="Bouwman A."/>
            <person name="Mays S."/>
            <person name="Watson C."/>
            <person name="Lockwood D."/>
            <person name="Khamispour A."/>
            <person name="Dowlati Y."/>
            <person name="Jianping S."/>
            <person name="Rea T.H."/>
            <person name="Vera-Cabrera L."/>
            <person name="Stefani M.M."/>
            <person name="Banu S."/>
            <person name="Macdonald M."/>
            <person name="Sapkota B.R."/>
            <person name="Spencer J.S."/>
            <person name="Thomas J."/>
            <person name="Harshman K."/>
            <person name="Singh P."/>
            <person name="Busso P."/>
            <person name="Gattiker A."/>
            <person name="Rougemont J."/>
            <person name="Brennan P.J."/>
            <person name="Cole S.T."/>
        </authorList>
    </citation>
    <scope>NUCLEOTIDE SEQUENCE [LARGE SCALE GENOMIC DNA]</scope>
    <source>
        <strain>Br4923</strain>
    </source>
</reference>
<proteinExistence type="inferred from homology"/>
<gene>
    <name evidence="1" type="primary">rpsP</name>
    <name type="ordered locus">MLBr01618</name>
</gene>
<name>RS16_MYCLB</name>
<organism>
    <name type="scientific">Mycobacterium leprae (strain Br4923)</name>
    <dbReference type="NCBI Taxonomy" id="561304"/>
    <lineage>
        <taxon>Bacteria</taxon>
        <taxon>Bacillati</taxon>
        <taxon>Actinomycetota</taxon>
        <taxon>Actinomycetes</taxon>
        <taxon>Mycobacteriales</taxon>
        <taxon>Mycobacteriaceae</taxon>
        <taxon>Mycobacterium</taxon>
    </lineage>
</organism>
<comment type="similarity">
    <text evidence="1">Belongs to the bacterial ribosomal protein bS16 family.</text>
</comment>
<sequence length="160" mass="17446">MAVKIKLTRLGKIRNPQYRVIVADARTRRDGRSIEVIGRYHPKEEPSLIDINSERTQYWLSVGAKPTEPVLKLLKITGDWQKFKGLPGAEGRLKVAPPKPSKLELFNAALAVADGGPTTEATRPKKKVSAKKAAKAVESDAEGAKATKAYALAEGDEQSE</sequence>